<comment type="function">
    <text evidence="1">Cleaves peptides in various proteins in a process that requires ATP hydrolysis. Has a chymotrypsin-like activity. Plays a major role in the degradation of misfolded proteins.</text>
</comment>
<comment type="catalytic activity">
    <reaction evidence="1">
        <text>Hydrolysis of proteins to small peptides in the presence of ATP and magnesium. alpha-casein is the usual test substrate. In the absence of ATP, only oligopeptides shorter than five residues are hydrolyzed (such as succinyl-Leu-Tyr-|-NHMec, and Leu-Tyr-Leu-|-Tyr-Trp, in which cleavage of the -Tyr-|-Leu- and -Tyr-|-Trp bonds also occurs).</text>
        <dbReference type="EC" id="3.4.21.92"/>
    </reaction>
</comment>
<comment type="subunit">
    <text evidence="1">Fourteen ClpP subunits assemble into 2 heptameric rings which stack back to back to give a disk-like structure with a central cavity, resembling the structure of eukaryotic proteasomes.</text>
</comment>
<comment type="subcellular location">
    <subcellularLocation>
        <location evidence="1">Cytoplasm</location>
    </subcellularLocation>
</comment>
<comment type="similarity">
    <text evidence="1">Belongs to the peptidase S14 family.</text>
</comment>
<organism>
    <name type="scientific">Rhodopseudomonas palustris (strain BisB5)</name>
    <dbReference type="NCBI Taxonomy" id="316057"/>
    <lineage>
        <taxon>Bacteria</taxon>
        <taxon>Pseudomonadati</taxon>
        <taxon>Pseudomonadota</taxon>
        <taxon>Alphaproteobacteria</taxon>
        <taxon>Hyphomicrobiales</taxon>
        <taxon>Nitrobacteraceae</taxon>
        <taxon>Rhodopseudomonas</taxon>
    </lineage>
</organism>
<reference key="1">
    <citation type="submission" date="2006-03" db="EMBL/GenBank/DDBJ databases">
        <title>Complete sequence of Rhodopseudomonas palustris BisB5.</title>
        <authorList>
            <consortium name="US DOE Joint Genome Institute"/>
            <person name="Copeland A."/>
            <person name="Lucas S."/>
            <person name="Lapidus A."/>
            <person name="Barry K."/>
            <person name="Detter J.C."/>
            <person name="Glavina del Rio T."/>
            <person name="Hammon N."/>
            <person name="Israni S."/>
            <person name="Dalin E."/>
            <person name="Tice H."/>
            <person name="Pitluck S."/>
            <person name="Chain P."/>
            <person name="Malfatti S."/>
            <person name="Shin M."/>
            <person name="Vergez L."/>
            <person name="Schmutz J."/>
            <person name="Larimer F."/>
            <person name="Land M."/>
            <person name="Hauser L."/>
            <person name="Pelletier D.A."/>
            <person name="Kyrpides N."/>
            <person name="Lykidis A."/>
            <person name="Oda Y."/>
            <person name="Harwood C.S."/>
            <person name="Richardson P."/>
        </authorList>
    </citation>
    <scope>NUCLEOTIDE SEQUENCE [LARGE SCALE GENOMIC DNA]</scope>
    <source>
        <strain>BisB5</strain>
    </source>
</reference>
<keyword id="KW-0963">Cytoplasm</keyword>
<keyword id="KW-0378">Hydrolase</keyword>
<keyword id="KW-0645">Protease</keyword>
<keyword id="KW-0720">Serine protease</keyword>
<protein>
    <recommendedName>
        <fullName evidence="1">ATP-dependent Clp protease proteolytic subunit</fullName>
        <ecNumber evidence="1">3.4.21.92</ecNumber>
    </recommendedName>
    <alternativeName>
        <fullName evidence="1">Endopeptidase Clp</fullName>
    </alternativeName>
</protein>
<feature type="chain" id="PRO_1000026118" description="ATP-dependent Clp protease proteolytic subunit">
    <location>
        <begin position="1"/>
        <end position="214"/>
    </location>
</feature>
<feature type="active site" description="Nucleophile" evidence="1">
    <location>
        <position position="106"/>
    </location>
</feature>
<feature type="active site" evidence="1">
    <location>
        <position position="131"/>
    </location>
</feature>
<dbReference type="EC" id="3.4.21.92" evidence="1"/>
<dbReference type="EMBL" id="CP000283">
    <property type="protein sequence ID" value="ABE40122.1"/>
    <property type="molecule type" value="Genomic_DNA"/>
</dbReference>
<dbReference type="SMR" id="Q135W7"/>
<dbReference type="STRING" id="316057.RPD_2894"/>
<dbReference type="MEROPS" id="S14.001"/>
<dbReference type="KEGG" id="rpd:RPD_2894"/>
<dbReference type="eggNOG" id="COG0740">
    <property type="taxonomic scope" value="Bacteria"/>
</dbReference>
<dbReference type="HOGENOM" id="CLU_058707_3_2_5"/>
<dbReference type="BioCyc" id="RPAL316057:RPD_RS14550-MONOMER"/>
<dbReference type="Proteomes" id="UP000001818">
    <property type="component" value="Chromosome"/>
</dbReference>
<dbReference type="GO" id="GO:0005737">
    <property type="term" value="C:cytoplasm"/>
    <property type="evidence" value="ECO:0007669"/>
    <property type="project" value="UniProtKB-SubCell"/>
</dbReference>
<dbReference type="GO" id="GO:0009368">
    <property type="term" value="C:endopeptidase Clp complex"/>
    <property type="evidence" value="ECO:0007669"/>
    <property type="project" value="TreeGrafter"/>
</dbReference>
<dbReference type="GO" id="GO:0004176">
    <property type="term" value="F:ATP-dependent peptidase activity"/>
    <property type="evidence" value="ECO:0007669"/>
    <property type="project" value="InterPro"/>
</dbReference>
<dbReference type="GO" id="GO:0051117">
    <property type="term" value="F:ATPase binding"/>
    <property type="evidence" value="ECO:0007669"/>
    <property type="project" value="TreeGrafter"/>
</dbReference>
<dbReference type="GO" id="GO:0004252">
    <property type="term" value="F:serine-type endopeptidase activity"/>
    <property type="evidence" value="ECO:0007669"/>
    <property type="project" value="UniProtKB-UniRule"/>
</dbReference>
<dbReference type="GO" id="GO:0006515">
    <property type="term" value="P:protein quality control for misfolded or incompletely synthesized proteins"/>
    <property type="evidence" value="ECO:0007669"/>
    <property type="project" value="TreeGrafter"/>
</dbReference>
<dbReference type="CDD" id="cd07017">
    <property type="entry name" value="S14_ClpP_2"/>
    <property type="match status" value="1"/>
</dbReference>
<dbReference type="FunFam" id="3.90.226.10:FF:000001">
    <property type="entry name" value="ATP-dependent Clp protease proteolytic subunit"/>
    <property type="match status" value="1"/>
</dbReference>
<dbReference type="Gene3D" id="3.90.226.10">
    <property type="entry name" value="2-enoyl-CoA Hydratase, Chain A, domain 1"/>
    <property type="match status" value="1"/>
</dbReference>
<dbReference type="HAMAP" id="MF_00444">
    <property type="entry name" value="ClpP"/>
    <property type="match status" value="1"/>
</dbReference>
<dbReference type="InterPro" id="IPR001907">
    <property type="entry name" value="ClpP"/>
</dbReference>
<dbReference type="InterPro" id="IPR029045">
    <property type="entry name" value="ClpP/crotonase-like_dom_sf"/>
</dbReference>
<dbReference type="InterPro" id="IPR023562">
    <property type="entry name" value="ClpP/TepA"/>
</dbReference>
<dbReference type="InterPro" id="IPR033135">
    <property type="entry name" value="ClpP_His_AS"/>
</dbReference>
<dbReference type="NCBIfam" id="NF001368">
    <property type="entry name" value="PRK00277.1"/>
    <property type="match status" value="1"/>
</dbReference>
<dbReference type="NCBIfam" id="NF009205">
    <property type="entry name" value="PRK12553.1"/>
    <property type="match status" value="1"/>
</dbReference>
<dbReference type="PANTHER" id="PTHR10381">
    <property type="entry name" value="ATP-DEPENDENT CLP PROTEASE PROTEOLYTIC SUBUNIT"/>
    <property type="match status" value="1"/>
</dbReference>
<dbReference type="PANTHER" id="PTHR10381:SF70">
    <property type="entry name" value="ATP-DEPENDENT CLP PROTEASE PROTEOLYTIC SUBUNIT"/>
    <property type="match status" value="1"/>
</dbReference>
<dbReference type="Pfam" id="PF00574">
    <property type="entry name" value="CLP_protease"/>
    <property type="match status" value="1"/>
</dbReference>
<dbReference type="PRINTS" id="PR00127">
    <property type="entry name" value="CLPPROTEASEP"/>
</dbReference>
<dbReference type="SUPFAM" id="SSF52096">
    <property type="entry name" value="ClpP/crotonase"/>
    <property type="match status" value="1"/>
</dbReference>
<dbReference type="PROSITE" id="PS00382">
    <property type="entry name" value="CLP_PROTEASE_HIS"/>
    <property type="match status" value="1"/>
</dbReference>
<evidence type="ECO:0000255" key="1">
    <source>
        <dbReference type="HAMAP-Rule" id="MF_00444"/>
    </source>
</evidence>
<gene>
    <name evidence="1" type="primary">clpP</name>
    <name type="ordered locus">RPD_2894</name>
</gene>
<name>CLPP_RHOPS</name>
<accession>Q135W7</accession>
<proteinExistence type="inferred from homology"/>
<sequence>MRDPVETYMNLVPMVVEQTNRGERAYDIFSRLLKERIIFLTGPVEDGMSTLVVAQLLFLEAENPKKEISMYINSPGGVVTSGLAIYDTMQFIRPPVSTLCTGQAASMGSLLLAAGHKDMRFSLPNARIMVHQPSGGFQGQATDIMLHAQEILNLKKRLNEIYVHHTGQTYKAIEDALERDKFLTAEMAREFGIVDKVIDKRAEETASASGPKAP</sequence>